<protein>
    <recommendedName>
        <fullName>SUZ RNA-binding domain-containing</fullName>
        <shortName>SUZ domain-containing protein 1</shortName>
    </recommendedName>
    <alternativeName>
        <fullName>Putative MAPK-activating protein PM18/PM20/PM22</fullName>
    </alternativeName>
</protein>
<reference key="1">
    <citation type="journal article" date="2003" name="Oncogene">
        <title>Large-scale identification and characterization of human genes that activate NF-kappaB and MAPK signaling pathways.</title>
        <authorList>
            <person name="Matsuda A."/>
            <person name="Suzuki Y."/>
            <person name="Honda G."/>
            <person name="Muramatsu S."/>
            <person name="Matsuzaki O."/>
            <person name="Nagano Y."/>
            <person name="Doi T."/>
            <person name="Shimotohno K."/>
            <person name="Harada T."/>
            <person name="Nishida E."/>
            <person name="Hayashi H."/>
            <person name="Sugano S."/>
        </authorList>
    </citation>
    <scope>NUCLEOTIDE SEQUENCE [LARGE SCALE MRNA] (ISOFORMS 1; 2 AND 4)</scope>
    <source>
        <tissue>Lung fibroblast</tissue>
    </source>
</reference>
<reference key="2">
    <citation type="submission" date="2003-01" db="EMBL/GenBank/DDBJ databases">
        <title>Full length sequencing of some human and murine muscular transcripts (Telethon Italy project B41).</title>
        <authorList>
            <person name="Ievolella C."/>
            <person name="Zara I."/>
            <person name="Millino C."/>
            <person name="Faulkner G."/>
            <person name="Lanfranchi G."/>
        </authorList>
    </citation>
    <scope>NUCLEOTIDE SEQUENCE [LARGE SCALE MRNA] (ISOFORM 3)</scope>
    <source>
        <tissue>Skeletal muscle</tissue>
    </source>
</reference>
<reference key="3">
    <citation type="journal article" date="2007" name="BMC Genomics">
        <title>The full-ORF clone resource of the German cDNA consortium.</title>
        <authorList>
            <person name="Bechtel S."/>
            <person name="Rosenfelder H."/>
            <person name="Duda A."/>
            <person name="Schmidt C.P."/>
            <person name="Ernst U."/>
            <person name="Wellenreuther R."/>
            <person name="Mehrle A."/>
            <person name="Schuster C."/>
            <person name="Bahr A."/>
            <person name="Bloecker H."/>
            <person name="Heubner D."/>
            <person name="Hoerlein A."/>
            <person name="Michel G."/>
            <person name="Wedler H."/>
            <person name="Koehrer K."/>
            <person name="Ottenwaelder B."/>
            <person name="Poustka A."/>
            <person name="Wiemann S."/>
            <person name="Schupp I."/>
        </authorList>
    </citation>
    <scope>NUCLEOTIDE SEQUENCE [LARGE SCALE MRNA] (ISOFORM 2)</scope>
    <source>
        <tissue>Kidney</tissue>
    </source>
</reference>
<reference key="4">
    <citation type="journal article" date="2006" name="Nature">
        <title>The DNA sequence and biological annotation of human chromosome 1.</title>
        <authorList>
            <person name="Gregory S.G."/>
            <person name="Barlow K.F."/>
            <person name="McLay K.E."/>
            <person name="Kaul R."/>
            <person name="Swarbreck D."/>
            <person name="Dunham A."/>
            <person name="Scott C.E."/>
            <person name="Howe K.L."/>
            <person name="Woodfine K."/>
            <person name="Spencer C.C.A."/>
            <person name="Jones M.C."/>
            <person name="Gillson C."/>
            <person name="Searle S."/>
            <person name="Zhou Y."/>
            <person name="Kokocinski F."/>
            <person name="McDonald L."/>
            <person name="Evans R."/>
            <person name="Phillips K."/>
            <person name="Atkinson A."/>
            <person name="Cooper R."/>
            <person name="Jones C."/>
            <person name="Hall R.E."/>
            <person name="Andrews T.D."/>
            <person name="Lloyd C."/>
            <person name="Ainscough R."/>
            <person name="Almeida J.P."/>
            <person name="Ambrose K.D."/>
            <person name="Anderson F."/>
            <person name="Andrew R.W."/>
            <person name="Ashwell R.I.S."/>
            <person name="Aubin K."/>
            <person name="Babbage A.K."/>
            <person name="Bagguley C.L."/>
            <person name="Bailey J."/>
            <person name="Beasley H."/>
            <person name="Bethel G."/>
            <person name="Bird C.P."/>
            <person name="Bray-Allen S."/>
            <person name="Brown J.Y."/>
            <person name="Brown A.J."/>
            <person name="Buckley D."/>
            <person name="Burton J."/>
            <person name="Bye J."/>
            <person name="Carder C."/>
            <person name="Chapman J.C."/>
            <person name="Clark S.Y."/>
            <person name="Clarke G."/>
            <person name="Clee C."/>
            <person name="Cobley V."/>
            <person name="Collier R.E."/>
            <person name="Corby N."/>
            <person name="Coville G.J."/>
            <person name="Davies J."/>
            <person name="Deadman R."/>
            <person name="Dunn M."/>
            <person name="Earthrowl M."/>
            <person name="Ellington A.G."/>
            <person name="Errington H."/>
            <person name="Frankish A."/>
            <person name="Frankland J."/>
            <person name="French L."/>
            <person name="Garner P."/>
            <person name="Garnett J."/>
            <person name="Gay L."/>
            <person name="Ghori M.R.J."/>
            <person name="Gibson R."/>
            <person name="Gilby L.M."/>
            <person name="Gillett W."/>
            <person name="Glithero R.J."/>
            <person name="Grafham D.V."/>
            <person name="Griffiths C."/>
            <person name="Griffiths-Jones S."/>
            <person name="Grocock R."/>
            <person name="Hammond S."/>
            <person name="Harrison E.S.I."/>
            <person name="Hart E."/>
            <person name="Haugen E."/>
            <person name="Heath P.D."/>
            <person name="Holmes S."/>
            <person name="Holt K."/>
            <person name="Howden P.J."/>
            <person name="Hunt A.R."/>
            <person name="Hunt S.E."/>
            <person name="Hunter G."/>
            <person name="Isherwood J."/>
            <person name="James R."/>
            <person name="Johnson C."/>
            <person name="Johnson D."/>
            <person name="Joy A."/>
            <person name="Kay M."/>
            <person name="Kershaw J.K."/>
            <person name="Kibukawa M."/>
            <person name="Kimberley A.M."/>
            <person name="King A."/>
            <person name="Knights A.J."/>
            <person name="Lad H."/>
            <person name="Laird G."/>
            <person name="Lawlor S."/>
            <person name="Leongamornlert D.A."/>
            <person name="Lloyd D.M."/>
            <person name="Loveland J."/>
            <person name="Lovell J."/>
            <person name="Lush M.J."/>
            <person name="Lyne R."/>
            <person name="Martin S."/>
            <person name="Mashreghi-Mohammadi M."/>
            <person name="Matthews L."/>
            <person name="Matthews N.S.W."/>
            <person name="McLaren S."/>
            <person name="Milne S."/>
            <person name="Mistry S."/>
            <person name="Moore M.J.F."/>
            <person name="Nickerson T."/>
            <person name="O'Dell C.N."/>
            <person name="Oliver K."/>
            <person name="Palmeiri A."/>
            <person name="Palmer S.A."/>
            <person name="Parker A."/>
            <person name="Patel D."/>
            <person name="Pearce A.V."/>
            <person name="Peck A.I."/>
            <person name="Pelan S."/>
            <person name="Phelps K."/>
            <person name="Phillimore B.J."/>
            <person name="Plumb R."/>
            <person name="Rajan J."/>
            <person name="Raymond C."/>
            <person name="Rouse G."/>
            <person name="Saenphimmachak C."/>
            <person name="Sehra H.K."/>
            <person name="Sheridan E."/>
            <person name="Shownkeen R."/>
            <person name="Sims S."/>
            <person name="Skuce C.D."/>
            <person name="Smith M."/>
            <person name="Steward C."/>
            <person name="Subramanian S."/>
            <person name="Sycamore N."/>
            <person name="Tracey A."/>
            <person name="Tromans A."/>
            <person name="Van Helmond Z."/>
            <person name="Wall M."/>
            <person name="Wallis J.M."/>
            <person name="White S."/>
            <person name="Whitehead S.L."/>
            <person name="Wilkinson J.E."/>
            <person name="Willey D.L."/>
            <person name="Williams H."/>
            <person name="Wilming L."/>
            <person name="Wray P.W."/>
            <person name="Wu Z."/>
            <person name="Coulson A."/>
            <person name="Vaudin M."/>
            <person name="Sulston J.E."/>
            <person name="Durbin R.M."/>
            <person name="Hubbard T."/>
            <person name="Wooster R."/>
            <person name="Dunham I."/>
            <person name="Carter N.P."/>
            <person name="McVean G."/>
            <person name="Ross M.T."/>
            <person name="Harrow J."/>
            <person name="Olson M.V."/>
            <person name="Beck S."/>
            <person name="Rogers J."/>
            <person name="Bentley D.R."/>
        </authorList>
    </citation>
    <scope>NUCLEOTIDE SEQUENCE [LARGE SCALE GENOMIC DNA]</scope>
</reference>
<reference key="5">
    <citation type="journal article" date="2004" name="Genome Res.">
        <title>The status, quality, and expansion of the NIH full-length cDNA project: the Mammalian Gene Collection (MGC).</title>
        <authorList>
            <consortium name="The MGC Project Team"/>
        </authorList>
    </citation>
    <scope>NUCLEOTIDE SEQUENCE [LARGE SCALE MRNA] (ISOFORM 4)</scope>
    <source>
        <tissue>Kidney</tissue>
        <tissue>Pancreas</tissue>
    </source>
</reference>
<reference key="6">
    <citation type="journal article" date="2006" name="Cell">
        <title>Global, in vivo, and site-specific phosphorylation dynamics in signaling networks.</title>
        <authorList>
            <person name="Olsen J.V."/>
            <person name="Blagoev B."/>
            <person name="Gnad F."/>
            <person name="Macek B."/>
            <person name="Kumar C."/>
            <person name="Mortensen P."/>
            <person name="Mann M."/>
        </authorList>
    </citation>
    <scope>IDENTIFICATION BY MASS SPECTROMETRY [LARGE SCALE ANALYSIS]</scope>
    <source>
        <tissue>Cervix carcinoma</tissue>
    </source>
</reference>
<reference key="7">
    <citation type="journal article" date="2008" name="Proc. Natl. Acad. Sci. U.S.A.">
        <title>A quantitative atlas of mitotic phosphorylation.</title>
        <authorList>
            <person name="Dephoure N."/>
            <person name="Zhou C."/>
            <person name="Villen J."/>
            <person name="Beausoleil S.A."/>
            <person name="Bakalarski C.E."/>
            <person name="Elledge S.J."/>
            <person name="Gygi S.P."/>
        </authorList>
    </citation>
    <scope>PHOSPHORYLATION [LARGE SCALE ANALYSIS] AT SER-37; SER-39; SER-105 AND SER-107</scope>
    <scope>IDENTIFICATION BY MASS SPECTROMETRY [LARGE SCALE ANALYSIS]</scope>
    <source>
        <tissue>Cervix carcinoma</tissue>
    </source>
</reference>
<reference key="8">
    <citation type="journal article" date="2009" name="Anal. Chem.">
        <title>Lys-N and trypsin cover complementary parts of the phosphoproteome in a refined SCX-based approach.</title>
        <authorList>
            <person name="Gauci S."/>
            <person name="Helbig A.O."/>
            <person name="Slijper M."/>
            <person name="Krijgsveld J."/>
            <person name="Heck A.J."/>
            <person name="Mohammed S."/>
        </authorList>
    </citation>
    <scope>ACETYLATION [LARGE SCALE ANALYSIS] AT MET-1</scope>
    <scope>IDENTIFICATION BY MASS SPECTROMETRY [LARGE SCALE ANALYSIS]</scope>
</reference>
<reference key="9">
    <citation type="journal article" date="2009" name="Sci. Signal.">
        <title>Quantitative phosphoproteomic analysis of T cell receptor signaling reveals system-wide modulation of protein-protein interactions.</title>
        <authorList>
            <person name="Mayya V."/>
            <person name="Lundgren D.H."/>
            <person name="Hwang S.-I."/>
            <person name="Rezaul K."/>
            <person name="Wu L."/>
            <person name="Eng J.K."/>
            <person name="Rodionov V."/>
            <person name="Han D.K."/>
        </authorList>
    </citation>
    <scope>PHOSPHORYLATION [LARGE SCALE ANALYSIS] AT SER-39</scope>
    <scope>IDENTIFICATION BY MASS SPECTROMETRY [LARGE SCALE ANALYSIS]</scope>
    <source>
        <tissue>Leukemic T-cell</tissue>
    </source>
</reference>
<reference key="10">
    <citation type="journal article" date="2010" name="Sci. Signal.">
        <title>Quantitative phosphoproteomics reveals widespread full phosphorylation site occupancy during mitosis.</title>
        <authorList>
            <person name="Olsen J.V."/>
            <person name="Vermeulen M."/>
            <person name="Santamaria A."/>
            <person name="Kumar C."/>
            <person name="Miller M.L."/>
            <person name="Jensen L.J."/>
            <person name="Gnad F."/>
            <person name="Cox J."/>
            <person name="Jensen T.S."/>
            <person name="Nigg E.A."/>
            <person name="Brunak S."/>
            <person name="Mann M."/>
        </authorList>
    </citation>
    <scope>PHOSPHORYLATION [LARGE SCALE ANALYSIS] AT SER-37; SER-39 AND SER-51</scope>
    <scope>IDENTIFICATION BY MASS SPECTROMETRY [LARGE SCALE ANALYSIS]</scope>
    <source>
        <tissue>Cervix carcinoma</tissue>
    </source>
</reference>
<reference key="11">
    <citation type="journal article" date="2011" name="Sci. Signal.">
        <title>System-wide temporal characterization of the proteome and phosphoproteome of human embryonic stem cell differentiation.</title>
        <authorList>
            <person name="Rigbolt K.T."/>
            <person name="Prokhorova T.A."/>
            <person name="Akimov V."/>
            <person name="Henningsen J."/>
            <person name="Johansen P.T."/>
            <person name="Kratchmarova I."/>
            <person name="Kassem M."/>
            <person name="Mann M."/>
            <person name="Olsen J.V."/>
            <person name="Blagoev B."/>
        </authorList>
    </citation>
    <scope>PHOSPHORYLATION [LARGE SCALE ANALYSIS] AT SER-51</scope>
    <scope>IDENTIFICATION BY MASS SPECTROMETRY [LARGE SCALE ANALYSIS]</scope>
</reference>
<reference key="12">
    <citation type="journal article" date="2013" name="J. Proteome Res.">
        <title>Toward a comprehensive characterization of a human cancer cell phosphoproteome.</title>
        <authorList>
            <person name="Zhou H."/>
            <person name="Di Palma S."/>
            <person name="Preisinger C."/>
            <person name="Peng M."/>
            <person name="Polat A.N."/>
            <person name="Heck A.J."/>
            <person name="Mohammed S."/>
        </authorList>
    </citation>
    <scope>PHOSPHORYLATION [LARGE SCALE ANALYSIS] AT SER-39 AND SER-107</scope>
    <scope>IDENTIFICATION BY MASS SPECTROMETRY [LARGE SCALE ANALYSIS]</scope>
    <source>
        <tissue>Cervix carcinoma</tissue>
        <tissue>Erythroleukemia</tissue>
    </source>
</reference>
<reference key="13">
    <citation type="journal article" date="2014" name="J. Proteomics">
        <title>An enzyme assisted RP-RPLC approach for in-depth analysis of human liver phosphoproteome.</title>
        <authorList>
            <person name="Bian Y."/>
            <person name="Song C."/>
            <person name="Cheng K."/>
            <person name="Dong M."/>
            <person name="Wang F."/>
            <person name="Huang J."/>
            <person name="Sun D."/>
            <person name="Wang L."/>
            <person name="Ye M."/>
            <person name="Zou H."/>
        </authorList>
    </citation>
    <scope>PHOSPHORYLATION [LARGE SCALE ANALYSIS] AT SER-37; SER-39 AND SER-105</scope>
    <scope>IDENTIFICATION BY MASS SPECTROMETRY [LARGE SCALE ANALYSIS]</scope>
    <source>
        <tissue>Liver</tissue>
    </source>
</reference>
<organism>
    <name type="scientific">Homo sapiens</name>
    <name type="common">Human</name>
    <dbReference type="NCBI Taxonomy" id="9606"/>
    <lineage>
        <taxon>Eukaryota</taxon>
        <taxon>Metazoa</taxon>
        <taxon>Chordata</taxon>
        <taxon>Craniata</taxon>
        <taxon>Vertebrata</taxon>
        <taxon>Euteleostomi</taxon>
        <taxon>Mammalia</taxon>
        <taxon>Eutheria</taxon>
        <taxon>Euarchontoglires</taxon>
        <taxon>Primates</taxon>
        <taxon>Haplorrhini</taxon>
        <taxon>Catarrhini</taxon>
        <taxon>Hominidae</taxon>
        <taxon>Homo</taxon>
    </lineage>
</organism>
<feature type="chain" id="PRO_0000303068" description="SUZ RNA-binding domain-containing">
    <location>
        <begin position="1"/>
        <end position="152"/>
    </location>
</feature>
<feature type="domain" description="SUZ" evidence="1">
    <location>
        <begin position="42"/>
        <end position="107"/>
    </location>
</feature>
<feature type="domain" description="SUZ-C" evidence="2">
    <location>
        <begin position="111"/>
        <end position="152"/>
    </location>
</feature>
<feature type="region of interest" description="Disordered" evidence="3">
    <location>
        <begin position="30"/>
        <end position="152"/>
    </location>
</feature>
<feature type="compositionally biased region" description="Polar residues" evidence="3">
    <location>
        <begin position="66"/>
        <end position="81"/>
    </location>
</feature>
<feature type="compositionally biased region" description="Basic and acidic residues" evidence="3">
    <location>
        <begin position="89"/>
        <end position="100"/>
    </location>
</feature>
<feature type="compositionally biased region" description="Basic and acidic residues" evidence="3">
    <location>
        <begin position="113"/>
        <end position="130"/>
    </location>
</feature>
<feature type="modified residue" description="N-acetylmethionine" evidence="10">
    <location>
        <position position="1"/>
    </location>
</feature>
<feature type="modified residue" description="Phosphoserine" evidence="9 12 15">
    <location>
        <position position="37"/>
    </location>
</feature>
<feature type="modified residue" description="Phosphoserine" evidence="9 11 12 14 15">
    <location>
        <position position="39"/>
    </location>
</feature>
<feature type="modified residue" description="Phosphoserine" evidence="12 13">
    <location>
        <position position="51"/>
    </location>
</feature>
<feature type="modified residue" description="Phosphoserine" evidence="9 15">
    <location>
        <position position="105"/>
    </location>
</feature>
<feature type="modified residue" description="Phosphoserine" evidence="9 14">
    <location>
        <position position="107"/>
    </location>
</feature>
<feature type="splice variant" id="VSP_027995" description="In isoform 2." evidence="4 6">
    <original>MEDEEVAESWEEAADSGEIDRRLEKKLKITQKESR</original>
    <variation>MRRSLRAGKRRQTAG</variation>
    <location>
        <begin position="1"/>
        <end position="35"/>
    </location>
</feature>
<feature type="splice variant" id="VSP_027996" description="In isoform 4." evidence="4 5">
    <original>MEDEEVAESWEEAADSGEIDRRLEKKLKITQKES</original>
    <variation>MRRSLRAGKRRQTAG</variation>
    <location>
        <begin position="1"/>
        <end position="34"/>
    </location>
</feature>
<feature type="splice variant" id="VSP_027997" description="In isoform 3." evidence="7">
    <location>
        <begin position="18"/>
        <end position="35"/>
    </location>
</feature>
<feature type="splice variant" id="VSP_055690" description="In isoform 5." evidence="8">
    <location>
        <position position="34"/>
    </location>
</feature>
<name>SZRD1_HUMAN</name>
<accession>Q7Z422</accession>
<accession>A8MXJ2</accession>
<accession>C9K0U0</accession>
<accession>Q7Z424</accession>
<accession>Q8IVM2</accession>
<accession>Q8TBV3</accession>
<accession>Q9Y403</accession>
<evidence type="ECO:0000255" key="1">
    <source>
        <dbReference type="PROSITE-ProRule" id="PRU01009"/>
    </source>
</evidence>
<evidence type="ECO:0000255" key="2">
    <source>
        <dbReference type="PROSITE-ProRule" id="PRU01287"/>
    </source>
</evidence>
<evidence type="ECO:0000256" key="3">
    <source>
        <dbReference type="SAM" id="MobiDB-lite"/>
    </source>
</evidence>
<evidence type="ECO:0000303" key="4">
    <source>
    </source>
</evidence>
<evidence type="ECO:0000303" key="5">
    <source>
    </source>
</evidence>
<evidence type="ECO:0000303" key="6">
    <source>
    </source>
</evidence>
<evidence type="ECO:0000303" key="7">
    <source ref="2"/>
</evidence>
<evidence type="ECO:0000305" key="8"/>
<evidence type="ECO:0007744" key="9">
    <source>
    </source>
</evidence>
<evidence type="ECO:0007744" key="10">
    <source>
    </source>
</evidence>
<evidence type="ECO:0007744" key="11">
    <source>
    </source>
</evidence>
<evidence type="ECO:0007744" key="12">
    <source>
    </source>
</evidence>
<evidence type="ECO:0007744" key="13">
    <source>
    </source>
</evidence>
<evidence type="ECO:0007744" key="14">
    <source>
    </source>
</evidence>
<evidence type="ECO:0007744" key="15">
    <source>
    </source>
</evidence>
<gene>
    <name type="primary">SZRD1</name>
    <name type="synonym">C1orf144</name>
</gene>
<proteinExistence type="evidence at protein level"/>
<keyword id="KW-0007">Acetylation</keyword>
<keyword id="KW-0025">Alternative splicing</keyword>
<keyword id="KW-0597">Phosphoprotein</keyword>
<keyword id="KW-1267">Proteomics identification</keyword>
<keyword id="KW-1185">Reference proteome</keyword>
<sequence length="152" mass="16997">MEDEEVAESWEEAADSGEIDRRLEKKLKITQKESRKSKSPPKVPIVIQDDSLPAGPPPQIRILKRPTSNGVVSSPNSTSRPTLPVKSLAQREAEYAEARKRILGSASPEEEQEKPILDRPTRISQPEDSRQPNNVIRQPLGPDGSQGFKQRR</sequence>
<comment type="interaction">
    <interactant intactId="EBI-23877111">
        <id>Q7Z422-4</id>
    </interactant>
    <interactant intactId="EBI-727414">
        <id>Q9Y3F4</id>
        <label>STRAP</label>
    </interactant>
    <organismsDiffer>false</organismsDiffer>
    <experiments>3</experiments>
</comment>
<comment type="alternative products">
    <event type="alternative splicing"/>
    <isoform>
        <id>Q7Z422-1</id>
        <name>1</name>
        <sequence type="displayed"/>
    </isoform>
    <isoform>
        <id>Q7Z422-2</id>
        <name>2</name>
        <sequence type="described" ref="VSP_027995"/>
    </isoform>
    <isoform>
        <id>Q7Z422-3</id>
        <name>3</name>
        <sequence type="described" ref="VSP_027997"/>
    </isoform>
    <isoform>
        <id>Q7Z422-4</id>
        <name>4</name>
        <sequence type="described" ref="VSP_027996"/>
    </isoform>
    <isoform>
        <id>Q7Z422-5</id>
        <name>5</name>
        <sequence type="described" ref="VSP_055690"/>
    </isoform>
</comment>
<comment type="similarity">
    <text evidence="8">Belongs to the SZRD1 family.</text>
</comment>
<comment type="sequence caution" evidence="8">
    <conflict type="erroneous initiation">
        <sequence resource="EMBL-CDS" id="CAB43245"/>
    </conflict>
    <text>Extended N-terminus.</text>
</comment>
<comment type="sequence caution" evidence="8">
    <conflict type="erroneous initiation">
        <sequence resource="EMBL-CDS" id="CAC82500"/>
    </conflict>
    <text>Extended N-terminus.</text>
</comment>
<dbReference type="EMBL" id="AB097042">
    <property type="protein sequence ID" value="BAC77395.1"/>
    <property type="molecule type" value="mRNA"/>
</dbReference>
<dbReference type="EMBL" id="AB097044">
    <property type="protein sequence ID" value="BAC77397.1"/>
    <property type="molecule type" value="mRNA"/>
</dbReference>
<dbReference type="EMBL" id="AB097046">
    <property type="protein sequence ID" value="BAC77399.1"/>
    <property type="molecule type" value="mRNA"/>
</dbReference>
<dbReference type="EMBL" id="AJ295987">
    <property type="protein sequence ID" value="CAC82500.1"/>
    <property type="status" value="ALT_INIT"/>
    <property type="molecule type" value="mRNA"/>
</dbReference>
<dbReference type="EMBL" id="AL050028">
    <property type="protein sequence ID" value="CAB43245.1"/>
    <property type="status" value="ALT_INIT"/>
    <property type="molecule type" value="mRNA"/>
</dbReference>
<dbReference type="EMBL" id="AL358794">
    <property type="status" value="NOT_ANNOTATED_CDS"/>
    <property type="molecule type" value="Genomic_DNA"/>
</dbReference>
<dbReference type="EMBL" id="BC023988">
    <property type="protein sequence ID" value="AAH23988.1"/>
    <property type="molecule type" value="mRNA"/>
</dbReference>
<dbReference type="EMBL" id="BC065538">
    <property type="protein sequence ID" value="AAH65538.1"/>
    <property type="molecule type" value="mRNA"/>
</dbReference>
<dbReference type="CCDS" id="CCDS44065.1">
    <molecule id="Q7Z422-1"/>
</dbReference>
<dbReference type="CCDS" id="CCDS60000.1">
    <molecule id="Q7Z422-5"/>
</dbReference>
<dbReference type="PIR" id="T08712">
    <property type="entry name" value="T08712"/>
</dbReference>
<dbReference type="RefSeq" id="NP_001108072.1">
    <molecule id="Q7Z422-1"/>
    <property type="nucleotide sequence ID" value="NM_001114600.3"/>
</dbReference>
<dbReference type="RefSeq" id="NP_001258798.1">
    <molecule id="Q7Z422-5"/>
    <property type="nucleotide sequence ID" value="NM_001271869.2"/>
</dbReference>
<dbReference type="SMR" id="Q7Z422"/>
<dbReference type="BioGRID" id="117549">
    <property type="interactions" value="20"/>
</dbReference>
<dbReference type="FunCoup" id="Q7Z422">
    <property type="interactions" value="1531"/>
</dbReference>
<dbReference type="IntAct" id="Q7Z422">
    <property type="interactions" value="6"/>
</dbReference>
<dbReference type="STRING" id="9606.ENSP00000383866"/>
<dbReference type="GlyGen" id="Q7Z422">
    <property type="glycosylation" value="1 site, 1 O-linked glycan (1 site)"/>
</dbReference>
<dbReference type="iPTMnet" id="Q7Z422"/>
<dbReference type="PhosphoSitePlus" id="Q7Z422"/>
<dbReference type="BioMuta" id="SZRD1"/>
<dbReference type="jPOST" id="Q7Z422"/>
<dbReference type="MassIVE" id="Q7Z422"/>
<dbReference type="PaxDb" id="9606-ENSP00000383866"/>
<dbReference type="PeptideAtlas" id="Q7Z422"/>
<dbReference type="ProteomicsDB" id="12590"/>
<dbReference type="ProteomicsDB" id="69131">
    <molecule id="Q7Z422-1"/>
</dbReference>
<dbReference type="ProteomicsDB" id="69132">
    <molecule id="Q7Z422-2"/>
</dbReference>
<dbReference type="ProteomicsDB" id="69133">
    <molecule id="Q7Z422-3"/>
</dbReference>
<dbReference type="ProteomicsDB" id="69134">
    <molecule id="Q7Z422-4"/>
</dbReference>
<dbReference type="Pumba" id="Q7Z422"/>
<dbReference type="TopDownProteomics" id="Q7Z422-1">
    <molecule id="Q7Z422-1"/>
</dbReference>
<dbReference type="TopDownProteomics" id="Q7Z422-2">
    <molecule id="Q7Z422-2"/>
</dbReference>
<dbReference type="TopDownProteomics" id="Q7Z422-3">
    <molecule id="Q7Z422-3"/>
</dbReference>
<dbReference type="TopDownProteomics" id="Q7Z422-4">
    <molecule id="Q7Z422-4"/>
</dbReference>
<dbReference type="Antibodypedia" id="29172">
    <property type="antibodies" value="145 antibodies from 17 providers"/>
</dbReference>
<dbReference type="DNASU" id="26099"/>
<dbReference type="Ensembl" id="ENST00000401088.9">
    <molecule id="Q7Z422-1"/>
    <property type="protein sequence ID" value="ENSP00000383866.4"/>
    <property type="gene ID" value="ENSG00000055070.17"/>
</dbReference>
<dbReference type="Ensembl" id="ENST00000401089.3">
    <molecule id="Q7Z422-4"/>
    <property type="protein sequence ID" value="ENSP00000383867.3"/>
    <property type="gene ID" value="ENSG00000055070.17"/>
</dbReference>
<dbReference type="Ensembl" id="ENST00000471507.5">
    <molecule id="Q7Z422-5"/>
    <property type="protein sequence ID" value="ENSP00000419589.1"/>
    <property type="gene ID" value="ENSG00000055070.17"/>
</dbReference>
<dbReference type="Ensembl" id="ENST00000492354.1">
    <molecule id="Q7Z422-2"/>
    <property type="protein sequence ID" value="ENSP00000418012.1"/>
    <property type="gene ID" value="ENSG00000055070.17"/>
</dbReference>
<dbReference type="Ensembl" id="ENST00000707363.1">
    <molecule id="Q7Z422-1"/>
    <property type="protein sequence ID" value="ENSP00000516842.1"/>
    <property type="gene ID" value="ENSG00000291379.1"/>
</dbReference>
<dbReference type="Ensembl" id="ENST00000707364.1">
    <molecule id="Q7Z422-5"/>
    <property type="protein sequence ID" value="ENSP00000516843.1"/>
    <property type="gene ID" value="ENSG00000291379.1"/>
</dbReference>
<dbReference type="Ensembl" id="ENST00000707365.1">
    <molecule id="Q7Z422-4"/>
    <property type="protein sequence ID" value="ENSP00000516844.1"/>
    <property type="gene ID" value="ENSG00000291379.1"/>
</dbReference>
<dbReference type="Ensembl" id="ENST00000707370.1">
    <molecule id="Q7Z422-2"/>
    <property type="protein sequence ID" value="ENSP00000516846.1"/>
    <property type="gene ID" value="ENSG00000291379.1"/>
</dbReference>
<dbReference type="GeneID" id="26099"/>
<dbReference type="KEGG" id="hsa:26099"/>
<dbReference type="MANE-Select" id="ENST00000401088.9">
    <property type="protein sequence ID" value="ENSP00000383866.4"/>
    <property type="RefSeq nucleotide sequence ID" value="NM_001114600.3"/>
    <property type="RefSeq protein sequence ID" value="NP_001108072.1"/>
</dbReference>
<dbReference type="UCSC" id="uc001ayi.6">
    <molecule id="Q7Z422-1"/>
    <property type="organism name" value="human"/>
</dbReference>
<dbReference type="AGR" id="HGNC:30232"/>
<dbReference type="CTD" id="26099"/>
<dbReference type="DisGeNET" id="26099"/>
<dbReference type="GeneCards" id="SZRD1"/>
<dbReference type="HGNC" id="HGNC:30232">
    <property type="gene designation" value="SZRD1"/>
</dbReference>
<dbReference type="HPA" id="ENSG00000055070">
    <property type="expression patterns" value="Low tissue specificity"/>
</dbReference>
<dbReference type="MIM" id="620682">
    <property type="type" value="gene"/>
</dbReference>
<dbReference type="neXtProt" id="NX_Q7Z422"/>
<dbReference type="OpenTargets" id="ENSG00000055070"/>
<dbReference type="PharmGKB" id="PA142672461"/>
<dbReference type="VEuPathDB" id="HostDB:ENSG00000055070"/>
<dbReference type="eggNOG" id="ENOG502RZH5">
    <property type="taxonomic scope" value="Eukaryota"/>
</dbReference>
<dbReference type="GeneTree" id="ENSGT00390000005532"/>
<dbReference type="HOGENOM" id="CLU_120658_0_0_1"/>
<dbReference type="InParanoid" id="Q7Z422"/>
<dbReference type="OMA" id="PACMSVQ"/>
<dbReference type="OrthoDB" id="5373615at2759"/>
<dbReference type="PAN-GO" id="Q7Z422">
    <property type="GO annotations" value="0 GO annotations based on evolutionary models"/>
</dbReference>
<dbReference type="PhylomeDB" id="Q7Z422"/>
<dbReference type="TreeFam" id="TF324643"/>
<dbReference type="PathwayCommons" id="Q7Z422"/>
<dbReference type="SignaLink" id="Q7Z422"/>
<dbReference type="BioGRID-ORCS" id="26099">
    <property type="hits" value="22 hits in 1162 CRISPR screens"/>
</dbReference>
<dbReference type="ChiTaRS" id="SZRD1">
    <property type="organism name" value="human"/>
</dbReference>
<dbReference type="GenomeRNAi" id="26099"/>
<dbReference type="Pharos" id="Q7Z422">
    <property type="development level" value="Tdark"/>
</dbReference>
<dbReference type="PRO" id="PR:Q7Z422"/>
<dbReference type="Proteomes" id="UP000005640">
    <property type="component" value="Chromosome 1"/>
</dbReference>
<dbReference type="RNAct" id="Q7Z422">
    <property type="molecule type" value="protein"/>
</dbReference>
<dbReference type="Bgee" id="ENSG00000055070">
    <property type="expression patterns" value="Expressed in mucosa of stomach and 204 other cell types or tissues"/>
</dbReference>
<dbReference type="ExpressionAtlas" id="Q7Z422">
    <property type="expression patterns" value="baseline and differential"/>
</dbReference>
<dbReference type="InterPro" id="IPR024771">
    <property type="entry name" value="SUZ"/>
</dbReference>
<dbReference type="InterPro" id="IPR024642">
    <property type="entry name" value="SUZ-C"/>
</dbReference>
<dbReference type="InterPro" id="IPR039228">
    <property type="entry name" value="SZRD1"/>
</dbReference>
<dbReference type="PANTHER" id="PTHR31796">
    <property type="entry name" value="SUZ DOMAIN-CONTAINING PROTEIN 1"/>
    <property type="match status" value="1"/>
</dbReference>
<dbReference type="PANTHER" id="PTHR31796:SF2">
    <property type="entry name" value="SUZ DOMAIN-CONTAINING PROTEIN 1"/>
    <property type="match status" value="1"/>
</dbReference>
<dbReference type="Pfam" id="PF12752">
    <property type="entry name" value="SUZ"/>
    <property type="match status" value="1"/>
</dbReference>
<dbReference type="Pfam" id="PF12901">
    <property type="entry name" value="SUZ-C"/>
    <property type="match status" value="1"/>
</dbReference>
<dbReference type="PROSITE" id="PS51673">
    <property type="entry name" value="SUZ"/>
    <property type="match status" value="1"/>
</dbReference>
<dbReference type="PROSITE" id="PS51938">
    <property type="entry name" value="SUZ_C"/>
    <property type="match status" value="1"/>
</dbReference>